<name>RNPH_CORK4</name>
<dbReference type="EC" id="2.7.7.56" evidence="1"/>
<dbReference type="EMBL" id="CP001620">
    <property type="protein sequence ID" value="ACR18140.1"/>
    <property type="molecule type" value="Genomic_DNA"/>
</dbReference>
<dbReference type="RefSeq" id="WP_012732027.1">
    <property type="nucleotide sequence ID" value="NC_012704.1"/>
</dbReference>
<dbReference type="SMR" id="C4LJY5"/>
<dbReference type="STRING" id="645127.ckrop_1400"/>
<dbReference type="KEGG" id="ckp:ckrop_1400"/>
<dbReference type="eggNOG" id="COG0689">
    <property type="taxonomic scope" value="Bacteria"/>
</dbReference>
<dbReference type="HOGENOM" id="CLU_050858_0_0_11"/>
<dbReference type="OrthoDB" id="9802265at2"/>
<dbReference type="Proteomes" id="UP000001473">
    <property type="component" value="Chromosome"/>
</dbReference>
<dbReference type="GO" id="GO:0000175">
    <property type="term" value="F:3'-5'-RNA exonuclease activity"/>
    <property type="evidence" value="ECO:0007669"/>
    <property type="project" value="UniProtKB-UniRule"/>
</dbReference>
<dbReference type="GO" id="GO:0000049">
    <property type="term" value="F:tRNA binding"/>
    <property type="evidence" value="ECO:0007669"/>
    <property type="project" value="UniProtKB-UniRule"/>
</dbReference>
<dbReference type="GO" id="GO:0009022">
    <property type="term" value="F:tRNA nucleotidyltransferase activity"/>
    <property type="evidence" value="ECO:0007669"/>
    <property type="project" value="UniProtKB-UniRule"/>
</dbReference>
<dbReference type="GO" id="GO:0016075">
    <property type="term" value="P:rRNA catabolic process"/>
    <property type="evidence" value="ECO:0007669"/>
    <property type="project" value="UniProtKB-UniRule"/>
</dbReference>
<dbReference type="GO" id="GO:0006364">
    <property type="term" value="P:rRNA processing"/>
    <property type="evidence" value="ECO:0007669"/>
    <property type="project" value="UniProtKB-KW"/>
</dbReference>
<dbReference type="GO" id="GO:0008033">
    <property type="term" value="P:tRNA processing"/>
    <property type="evidence" value="ECO:0007669"/>
    <property type="project" value="UniProtKB-UniRule"/>
</dbReference>
<dbReference type="CDD" id="cd11362">
    <property type="entry name" value="RNase_PH_bact"/>
    <property type="match status" value="1"/>
</dbReference>
<dbReference type="FunFam" id="3.30.230.70:FF:000003">
    <property type="entry name" value="Ribonuclease PH"/>
    <property type="match status" value="1"/>
</dbReference>
<dbReference type="Gene3D" id="3.30.230.70">
    <property type="entry name" value="GHMP Kinase, N-terminal domain"/>
    <property type="match status" value="1"/>
</dbReference>
<dbReference type="HAMAP" id="MF_00564">
    <property type="entry name" value="RNase_PH"/>
    <property type="match status" value="1"/>
</dbReference>
<dbReference type="InterPro" id="IPR001247">
    <property type="entry name" value="ExoRNase_PH_dom1"/>
</dbReference>
<dbReference type="InterPro" id="IPR015847">
    <property type="entry name" value="ExoRNase_PH_dom2"/>
</dbReference>
<dbReference type="InterPro" id="IPR036345">
    <property type="entry name" value="ExoRNase_PH_dom2_sf"/>
</dbReference>
<dbReference type="InterPro" id="IPR027408">
    <property type="entry name" value="PNPase/RNase_PH_dom_sf"/>
</dbReference>
<dbReference type="InterPro" id="IPR020568">
    <property type="entry name" value="Ribosomal_Su5_D2-typ_SF"/>
</dbReference>
<dbReference type="InterPro" id="IPR050080">
    <property type="entry name" value="RNase_PH"/>
</dbReference>
<dbReference type="InterPro" id="IPR002381">
    <property type="entry name" value="RNase_PH_bac-type"/>
</dbReference>
<dbReference type="InterPro" id="IPR018336">
    <property type="entry name" value="RNase_PH_CS"/>
</dbReference>
<dbReference type="NCBIfam" id="TIGR01966">
    <property type="entry name" value="RNasePH"/>
    <property type="match status" value="1"/>
</dbReference>
<dbReference type="PANTHER" id="PTHR11953">
    <property type="entry name" value="EXOSOME COMPLEX COMPONENT"/>
    <property type="match status" value="1"/>
</dbReference>
<dbReference type="PANTHER" id="PTHR11953:SF0">
    <property type="entry name" value="EXOSOME COMPLEX COMPONENT RRP41"/>
    <property type="match status" value="1"/>
</dbReference>
<dbReference type="Pfam" id="PF01138">
    <property type="entry name" value="RNase_PH"/>
    <property type="match status" value="1"/>
</dbReference>
<dbReference type="Pfam" id="PF03725">
    <property type="entry name" value="RNase_PH_C"/>
    <property type="match status" value="1"/>
</dbReference>
<dbReference type="SUPFAM" id="SSF55666">
    <property type="entry name" value="Ribonuclease PH domain 2-like"/>
    <property type="match status" value="1"/>
</dbReference>
<dbReference type="SUPFAM" id="SSF54211">
    <property type="entry name" value="Ribosomal protein S5 domain 2-like"/>
    <property type="match status" value="1"/>
</dbReference>
<dbReference type="PROSITE" id="PS01277">
    <property type="entry name" value="RIBONUCLEASE_PH"/>
    <property type="match status" value="1"/>
</dbReference>
<proteinExistence type="inferred from homology"/>
<reference key="1">
    <citation type="journal article" date="2008" name="J. Biotechnol.">
        <title>Ultrafast pyrosequencing of Corynebacterium kroppenstedtii DSM44385 revealed insights into the physiology of a lipophilic corynebacterium that lacks mycolic acids.</title>
        <authorList>
            <person name="Tauch A."/>
            <person name="Schneider J."/>
            <person name="Szczepanowski R."/>
            <person name="Tilker A."/>
            <person name="Viehoever P."/>
            <person name="Gartemann K.-H."/>
            <person name="Arnold W."/>
            <person name="Blom J."/>
            <person name="Brinkrolf K."/>
            <person name="Brune I."/>
            <person name="Goetker S."/>
            <person name="Weisshaar B."/>
            <person name="Goesmann A."/>
            <person name="Droege M."/>
            <person name="Puehler A."/>
        </authorList>
    </citation>
    <scope>NUCLEOTIDE SEQUENCE [LARGE SCALE GENOMIC DNA]</scope>
    <source>
        <strain>DSM 44385 / JCM 11950 / CIP 105744 / CCUG 35717</strain>
    </source>
</reference>
<gene>
    <name evidence="1" type="primary">rph</name>
    <name type="ordered locus">ckrop_1400</name>
</gene>
<accession>C4LJY5</accession>
<protein>
    <recommendedName>
        <fullName evidence="1">Ribonuclease PH</fullName>
        <shortName evidence="1">RNase PH</shortName>
        <ecNumber evidence="1">2.7.7.56</ecNumber>
    </recommendedName>
    <alternativeName>
        <fullName evidence="1">tRNA nucleotidyltransferase</fullName>
    </alternativeName>
</protein>
<feature type="chain" id="PRO_1000212060" description="Ribonuclease PH">
    <location>
        <begin position="1"/>
        <end position="254"/>
    </location>
</feature>
<feature type="binding site" evidence="1">
    <location>
        <position position="90"/>
    </location>
    <ligand>
        <name>phosphate</name>
        <dbReference type="ChEBI" id="CHEBI:43474"/>
        <note>substrate</note>
    </ligand>
</feature>
<feature type="binding site" evidence="1">
    <location>
        <begin position="128"/>
        <end position="130"/>
    </location>
    <ligand>
        <name>phosphate</name>
        <dbReference type="ChEBI" id="CHEBI:43474"/>
        <note>substrate</note>
    </ligand>
</feature>
<organism>
    <name type="scientific">Corynebacterium kroppenstedtii (strain DSM 44385 / JCM 11950 / CIP 105744 / CCUG 35717)</name>
    <dbReference type="NCBI Taxonomy" id="645127"/>
    <lineage>
        <taxon>Bacteria</taxon>
        <taxon>Bacillati</taxon>
        <taxon>Actinomycetota</taxon>
        <taxon>Actinomycetes</taxon>
        <taxon>Mycobacteriales</taxon>
        <taxon>Corynebacteriaceae</taxon>
        <taxon>Corynebacterium</taxon>
    </lineage>
</organism>
<evidence type="ECO:0000255" key="1">
    <source>
        <dbReference type="HAMAP-Rule" id="MF_00564"/>
    </source>
</evidence>
<comment type="function">
    <text evidence="1">Phosphorolytic 3'-5' exoribonuclease that plays an important role in tRNA 3'-end maturation. Removes nucleotide residues following the 3'-CCA terminus of tRNAs; can also add nucleotides to the ends of RNA molecules by using nucleoside diphosphates as substrates, but this may not be physiologically important. Probably plays a role in initiation of 16S rRNA degradation (leading to ribosome degradation) during starvation.</text>
</comment>
<comment type="catalytic activity">
    <reaction evidence="1">
        <text>tRNA(n+1) + phosphate = tRNA(n) + a ribonucleoside 5'-diphosphate</text>
        <dbReference type="Rhea" id="RHEA:10628"/>
        <dbReference type="Rhea" id="RHEA-COMP:17343"/>
        <dbReference type="Rhea" id="RHEA-COMP:17344"/>
        <dbReference type="ChEBI" id="CHEBI:43474"/>
        <dbReference type="ChEBI" id="CHEBI:57930"/>
        <dbReference type="ChEBI" id="CHEBI:173114"/>
        <dbReference type="EC" id="2.7.7.56"/>
    </reaction>
</comment>
<comment type="subunit">
    <text evidence="1">Homohexameric ring arranged as a trimer of dimers.</text>
</comment>
<comment type="similarity">
    <text evidence="1">Belongs to the RNase PH family.</text>
</comment>
<sequence length="254" mass="27684">MSDFVRADGRALDEMRPVRIVRGFTTNPAGSVLVEFGNTRVMCTASVEDRVPRFKKDSGEGWLTAEYSMLPSATAERMPRESMRGKVKGRTHEISRLVGRSLRAAIDLKALGENTIALDCDVLQADGGTRTASITGAYVALADALTYLEAEGLVSQNALLPPVAAVSVGLIDGHVCLDLPYEEDSRAEVDMNVVMTESGEFVEIQGTGEHSTFSREQLMQFMDAAEKGCSELIRAQKEALSKPYPKRLPNRKNA</sequence>
<keyword id="KW-0548">Nucleotidyltransferase</keyword>
<keyword id="KW-1185">Reference proteome</keyword>
<keyword id="KW-0694">RNA-binding</keyword>
<keyword id="KW-0698">rRNA processing</keyword>
<keyword id="KW-0808">Transferase</keyword>
<keyword id="KW-0819">tRNA processing</keyword>
<keyword id="KW-0820">tRNA-binding</keyword>